<evidence type="ECO:0000250" key="1">
    <source>
        <dbReference type="UniProtKB" id="O75449"/>
    </source>
</evidence>
<evidence type="ECO:0000255" key="2">
    <source>
        <dbReference type="HAMAP-Rule" id="MF_03023"/>
    </source>
</evidence>
<evidence type="ECO:0000256" key="3">
    <source>
        <dbReference type="SAM" id="MobiDB-lite"/>
    </source>
</evidence>
<proteinExistence type="evidence at transcript level"/>
<name>KTNA1_XENTR</name>
<organism>
    <name type="scientific">Xenopus tropicalis</name>
    <name type="common">Western clawed frog</name>
    <name type="synonym">Silurana tropicalis</name>
    <dbReference type="NCBI Taxonomy" id="8364"/>
    <lineage>
        <taxon>Eukaryota</taxon>
        <taxon>Metazoa</taxon>
        <taxon>Chordata</taxon>
        <taxon>Craniata</taxon>
        <taxon>Vertebrata</taxon>
        <taxon>Euteleostomi</taxon>
        <taxon>Amphibia</taxon>
        <taxon>Batrachia</taxon>
        <taxon>Anura</taxon>
        <taxon>Pipoidea</taxon>
        <taxon>Pipidae</taxon>
        <taxon>Xenopodinae</taxon>
        <taxon>Xenopus</taxon>
        <taxon>Silurana</taxon>
    </lineage>
</organism>
<sequence>MSLLMISENVKLAREYALLGNYDSAMVYYQGVLDQMNKYLYSVKDTFLQQKWQQVWQEINMEAKHVKDIMSTLEGFKLDNSPVKTTQHEFPAHDGEVWSLPVPVERRPSPGPRKRQSVQCNDNKSHNNRFGAGKGPNLPSSKNTNNVKMKPVRAREKKDTFLKVKDEKNKSSVDVSETEVKKFDGTGYDKDLIEALERDIISQNPNIRWDDIADLEEAKKLLKEAVVLPMWMPEFFKGIRRPWKGVLMVGPPGTGKTLLAKAVATECKTTFFNISSSTLTSKYRGESEKLVRLLFEMARFYAPTTIFIDEIDSICSRRGTSEEHEASRRVKAELLVQMDGVGGASENEDPSKMVMVLAATNFPWDIDEALRRRLEKRIYIPLPSAKGREELLRINLKELELADDVNIECIAENMDGYSGADITNVCRDASLMAMRRRIEGLTPEEIRNLSRDDMHMPTTMEDFEMALKKVSKSVSASDIEKYEKWIEEFGSC</sequence>
<dbReference type="EC" id="5.6.1.1" evidence="2"/>
<dbReference type="EMBL" id="BC121679">
    <property type="protein sequence ID" value="AAI21680.1"/>
    <property type="molecule type" value="mRNA"/>
</dbReference>
<dbReference type="RefSeq" id="NP_001072433.1">
    <property type="nucleotide sequence ID" value="NM_001078965.1"/>
</dbReference>
<dbReference type="SMR" id="Q0IIR9"/>
<dbReference type="FunCoup" id="Q0IIR9">
    <property type="interactions" value="1277"/>
</dbReference>
<dbReference type="STRING" id="8364.ENSXETP00000050376"/>
<dbReference type="PaxDb" id="8364-ENSXETP00000046241"/>
<dbReference type="GeneID" id="779887"/>
<dbReference type="KEGG" id="xtr:779887"/>
<dbReference type="AGR" id="Xenbase:XB-GENE-995720"/>
<dbReference type="CTD" id="11104"/>
<dbReference type="Xenbase" id="XB-GENE-995720">
    <property type="gene designation" value="katna1"/>
</dbReference>
<dbReference type="eggNOG" id="KOG0738">
    <property type="taxonomic scope" value="Eukaryota"/>
</dbReference>
<dbReference type="InParanoid" id="Q0IIR9"/>
<dbReference type="OMA" id="PRDEMHM"/>
<dbReference type="OrthoDB" id="5334845at2759"/>
<dbReference type="Proteomes" id="UP000008143">
    <property type="component" value="Chromosome 5"/>
</dbReference>
<dbReference type="Bgee" id="ENSXETG00000021382">
    <property type="expression patterns" value="Expressed in testis and 12 other cell types or tissues"/>
</dbReference>
<dbReference type="ExpressionAtlas" id="Q0IIR9">
    <property type="expression patterns" value="baseline"/>
</dbReference>
<dbReference type="GO" id="GO:0005813">
    <property type="term" value="C:centrosome"/>
    <property type="evidence" value="ECO:0007669"/>
    <property type="project" value="UniProtKB-SubCell"/>
</dbReference>
<dbReference type="GO" id="GO:0005737">
    <property type="term" value="C:cytoplasm"/>
    <property type="evidence" value="ECO:0000250"/>
    <property type="project" value="UniProtKB"/>
</dbReference>
<dbReference type="GO" id="GO:0005874">
    <property type="term" value="C:microtubule"/>
    <property type="evidence" value="ECO:0007669"/>
    <property type="project" value="UniProtKB-KW"/>
</dbReference>
<dbReference type="GO" id="GO:0030496">
    <property type="term" value="C:midbody"/>
    <property type="evidence" value="ECO:0000250"/>
    <property type="project" value="UniProtKB"/>
</dbReference>
<dbReference type="GO" id="GO:0097431">
    <property type="term" value="C:mitotic spindle pole"/>
    <property type="evidence" value="ECO:0000250"/>
    <property type="project" value="UniProtKB"/>
</dbReference>
<dbReference type="GO" id="GO:0005819">
    <property type="term" value="C:spindle"/>
    <property type="evidence" value="ECO:0000250"/>
    <property type="project" value="UniProtKB"/>
</dbReference>
<dbReference type="GO" id="GO:0000922">
    <property type="term" value="C:spindle pole"/>
    <property type="evidence" value="ECO:0000250"/>
    <property type="project" value="UniProtKB"/>
</dbReference>
<dbReference type="GO" id="GO:0005524">
    <property type="term" value="F:ATP binding"/>
    <property type="evidence" value="ECO:0007669"/>
    <property type="project" value="UniProtKB-KW"/>
</dbReference>
<dbReference type="GO" id="GO:0016887">
    <property type="term" value="F:ATP hydrolysis activity"/>
    <property type="evidence" value="ECO:0007669"/>
    <property type="project" value="InterPro"/>
</dbReference>
<dbReference type="GO" id="GO:0008017">
    <property type="term" value="F:microtubule binding"/>
    <property type="evidence" value="ECO:0007669"/>
    <property type="project" value="UniProtKB-UniRule"/>
</dbReference>
<dbReference type="GO" id="GO:0008568">
    <property type="term" value="F:microtubule severing ATPase activity"/>
    <property type="evidence" value="ECO:0007669"/>
    <property type="project" value="UniProtKB-EC"/>
</dbReference>
<dbReference type="GO" id="GO:0051301">
    <property type="term" value="P:cell division"/>
    <property type="evidence" value="ECO:0007669"/>
    <property type="project" value="UniProtKB-KW"/>
</dbReference>
<dbReference type="GO" id="GO:0051013">
    <property type="term" value="P:microtubule severing"/>
    <property type="evidence" value="ECO:0007669"/>
    <property type="project" value="UniProtKB-UniRule"/>
</dbReference>
<dbReference type="CDD" id="cd21748">
    <property type="entry name" value="Kp60-NTD"/>
    <property type="match status" value="1"/>
</dbReference>
<dbReference type="CDD" id="cd19522">
    <property type="entry name" value="RecA-like_KTNA1"/>
    <property type="match status" value="1"/>
</dbReference>
<dbReference type="FunFam" id="1.10.8.60:FF:000025">
    <property type="entry name" value="Katanin p60 ATPase-containing subunit A1"/>
    <property type="match status" value="1"/>
</dbReference>
<dbReference type="FunFam" id="1.20.58.80:FF:000003">
    <property type="entry name" value="Katanin p60 ATPase-containing subunit A1"/>
    <property type="match status" value="1"/>
</dbReference>
<dbReference type="FunFam" id="3.40.50.300:FF:000159">
    <property type="entry name" value="Katanin p60 ATPase-containing subunit A1"/>
    <property type="match status" value="1"/>
</dbReference>
<dbReference type="Gene3D" id="1.10.8.60">
    <property type="match status" value="1"/>
</dbReference>
<dbReference type="Gene3D" id="3.40.50.300">
    <property type="entry name" value="P-loop containing nucleotide triphosphate hydrolases"/>
    <property type="match status" value="1"/>
</dbReference>
<dbReference type="Gene3D" id="1.20.58.80">
    <property type="entry name" value="Phosphotransferase system, lactose/cellobiose-type IIA subunit"/>
    <property type="match status" value="1"/>
</dbReference>
<dbReference type="HAMAP" id="MF_03023">
    <property type="entry name" value="Katanin_p60_A1"/>
    <property type="match status" value="1"/>
</dbReference>
<dbReference type="InterPro" id="IPR003593">
    <property type="entry name" value="AAA+_ATPase"/>
</dbReference>
<dbReference type="InterPro" id="IPR041569">
    <property type="entry name" value="AAA_lid_3"/>
</dbReference>
<dbReference type="InterPro" id="IPR003959">
    <property type="entry name" value="ATPase_AAA_core"/>
</dbReference>
<dbReference type="InterPro" id="IPR003960">
    <property type="entry name" value="ATPase_AAA_CS"/>
</dbReference>
<dbReference type="InterPro" id="IPR028596">
    <property type="entry name" value="KATNA1"/>
</dbReference>
<dbReference type="InterPro" id="IPR048611">
    <property type="entry name" value="KATNA1_MIT"/>
</dbReference>
<dbReference type="InterPro" id="IPR048612">
    <property type="entry name" value="KTNA1_AAA_dom"/>
</dbReference>
<dbReference type="InterPro" id="IPR050304">
    <property type="entry name" value="MT-severing_AAA_ATPase"/>
</dbReference>
<dbReference type="InterPro" id="IPR027417">
    <property type="entry name" value="P-loop_NTPase"/>
</dbReference>
<dbReference type="InterPro" id="IPR015415">
    <property type="entry name" value="Spast_Vps4_C"/>
</dbReference>
<dbReference type="PANTHER" id="PTHR23074">
    <property type="entry name" value="AAA DOMAIN-CONTAINING"/>
    <property type="match status" value="1"/>
</dbReference>
<dbReference type="PANTHER" id="PTHR23074:SF71">
    <property type="entry name" value="KATANIN P60 ATPASE-CONTAINING SUBUNIT A1"/>
    <property type="match status" value="1"/>
</dbReference>
<dbReference type="Pfam" id="PF00004">
    <property type="entry name" value="AAA"/>
    <property type="match status" value="1"/>
</dbReference>
<dbReference type="Pfam" id="PF17862">
    <property type="entry name" value="AAA_lid_3"/>
    <property type="match status" value="1"/>
</dbReference>
<dbReference type="Pfam" id="PF21126">
    <property type="entry name" value="KATNA1_MIT"/>
    <property type="match status" value="1"/>
</dbReference>
<dbReference type="Pfam" id="PF09336">
    <property type="entry name" value="Vps4_C"/>
    <property type="match status" value="1"/>
</dbReference>
<dbReference type="SMART" id="SM00382">
    <property type="entry name" value="AAA"/>
    <property type="match status" value="1"/>
</dbReference>
<dbReference type="SUPFAM" id="SSF52540">
    <property type="entry name" value="P-loop containing nucleoside triphosphate hydrolases"/>
    <property type="match status" value="1"/>
</dbReference>
<dbReference type="PROSITE" id="PS00674">
    <property type="entry name" value="AAA"/>
    <property type="match status" value="1"/>
</dbReference>
<keyword id="KW-0067">ATP-binding</keyword>
<keyword id="KW-0131">Cell cycle</keyword>
<keyword id="KW-0132">Cell division</keyword>
<keyword id="KW-0963">Cytoplasm</keyword>
<keyword id="KW-0206">Cytoskeleton</keyword>
<keyword id="KW-0413">Isomerase</keyword>
<keyword id="KW-0493">Microtubule</keyword>
<keyword id="KW-0498">Mitosis</keyword>
<keyword id="KW-0547">Nucleotide-binding</keyword>
<keyword id="KW-1185">Reference proteome</keyword>
<gene>
    <name type="primary">katna1</name>
</gene>
<comment type="function">
    <text evidence="2">Catalytic subunit of a complex which severs microtubules in an ATP-dependent manner. Microtubule severing may promote rapid reorganization of cellular microtubule arrays and the release of microtubules from the centrosome following nucleation.</text>
</comment>
<comment type="catalytic activity">
    <reaction evidence="2">
        <text>n ATP + n H2O + a microtubule = n ADP + n phosphate + (n+1) alpha/beta tubulin heterodimers.</text>
        <dbReference type="EC" id="5.6.1.1"/>
    </reaction>
</comment>
<comment type="activity regulation">
    <text evidence="2">ATPase activity is stimulated by microtubules, which promote homooligomerization. ATP-dependent microtubule severing is stimulated by interaction with katnb1.</text>
</comment>
<comment type="subunit">
    <text evidence="2">Can homooligomerize into hexameric rings, which may be promoted by interaction with microtubules. Interacts with katnb1, which may serve as a targeting subunit.</text>
</comment>
<comment type="subcellular location">
    <subcellularLocation>
        <location evidence="2">Cytoplasm</location>
    </subcellularLocation>
    <subcellularLocation>
        <location evidence="2">Cytoplasm</location>
        <location evidence="2">Cytoskeleton</location>
        <location evidence="2">Microtubule organizing center</location>
        <location evidence="2">Centrosome</location>
    </subcellularLocation>
    <subcellularLocation>
        <location evidence="2">Cytoplasm</location>
        <location evidence="2">Cytoskeleton</location>
        <location evidence="2">Spindle pole</location>
    </subcellularLocation>
    <subcellularLocation>
        <location evidence="1">Cytoplasm</location>
        <location evidence="1">Cytoskeleton</location>
        <location evidence="1">Spindle</location>
    </subcellularLocation>
    <text evidence="2">Predominantly cytoplasmic. Also localized to the interphase centrosome and the mitotic spindle poles. Enhanced recruitment to the mitotic spindle poles requires microtubules and interaction with katnb1.</text>
</comment>
<comment type="similarity">
    <text evidence="2">Belongs to the AAA ATPase family. Katanin p60 subunit A1 subfamily.</text>
</comment>
<accession>Q0IIR9</accession>
<reference key="1">
    <citation type="submission" date="2006-08" db="EMBL/GenBank/DDBJ databases">
        <authorList>
            <consortium name="NIH - Xenopus Gene Collection (XGC) project"/>
        </authorList>
    </citation>
    <scope>NUCLEOTIDE SEQUENCE [LARGE SCALE MRNA]</scope>
    <source>
        <strain>N6</strain>
        <tissue>Oviduct</tissue>
    </source>
</reference>
<protein>
    <recommendedName>
        <fullName evidence="2">Katanin p60 ATPase-containing subunit A1</fullName>
        <shortName evidence="2">Katanin p60 subunit A1</shortName>
        <ecNumber evidence="2">5.6.1.1</ecNumber>
    </recommendedName>
    <alternativeName>
        <fullName evidence="2">p60 katanin</fullName>
    </alternativeName>
</protein>
<feature type="chain" id="PRO_0000367129" description="Katanin p60 ATPase-containing subunit A1">
    <location>
        <begin position="1"/>
        <end position="492"/>
    </location>
</feature>
<feature type="region of interest" description="Disordered" evidence="3">
    <location>
        <begin position="91"/>
        <end position="158"/>
    </location>
</feature>
<feature type="compositionally biased region" description="Polar residues" evidence="3">
    <location>
        <begin position="138"/>
        <end position="147"/>
    </location>
</feature>
<feature type="binding site" evidence="2">
    <location>
        <begin position="250"/>
        <end position="257"/>
    </location>
    <ligand>
        <name>ATP</name>
        <dbReference type="ChEBI" id="CHEBI:30616"/>
    </ligand>
</feature>